<reference key="1">
    <citation type="journal article" date="2000" name="Nature">
        <title>The complete sequence of the mucosal pathogen Ureaplasma urealyticum.</title>
        <authorList>
            <person name="Glass J.I."/>
            <person name="Lefkowitz E.J."/>
            <person name="Glass J.S."/>
            <person name="Heiner C.R."/>
            <person name="Chen E.Y."/>
            <person name="Cassell G.H."/>
        </authorList>
    </citation>
    <scope>NUCLEOTIDE SEQUENCE [LARGE SCALE GENOMIC DNA]</scope>
    <source>
        <strain>ATCC 700970</strain>
    </source>
</reference>
<dbReference type="EMBL" id="AF222894">
    <property type="protein sequence ID" value="AAF30447.1"/>
    <property type="molecule type" value="Genomic_DNA"/>
</dbReference>
<dbReference type="RefSeq" id="WP_010891664.1">
    <property type="nucleotide sequence ID" value="NC_002162.1"/>
</dbReference>
<dbReference type="SMR" id="Q9PRA3"/>
<dbReference type="STRING" id="273119.UU042"/>
<dbReference type="EnsemblBacteria" id="AAF30447">
    <property type="protein sequence ID" value="AAF30447"/>
    <property type="gene ID" value="UU042"/>
</dbReference>
<dbReference type="GeneID" id="29672168"/>
<dbReference type="KEGG" id="uur:UU042"/>
<dbReference type="PATRIC" id="fig|273119.6.peg.44"/>
<dbReference type="eggNOG" id="COG4095">
    <property type="taxonomic scope" value="Bacteria"/>
</dbReference>
<dbReference type="HOGENOM" id="CLU_153958_0_0_14"/>
<dbReference type="OrthoDB" id="9897604at2"/>
<dbReference type="Proteomes" id="UP000000423">
    <property type="component" value="Chromosome"/>
</dbReference>
<dbReference type="GO" id="GO:0005886">
    <property type="term" value="C:plasma membrane"/>
    <property type="evidence" value="ECO:0007669"/>
    <property type="project" value="UniProtKB-SubCell"/>
</dbReference>
<dbReference type="Gene3D" id="1.20.1280.290">
    <property type="match status" value="1"/>
</dbReference>
<feature type="chain" id="PRO_0000220787" description="Uncharacterized protein UU042">
    <location>
        <begin position="1"/>
        <end position="138"/>
    </location>
</feature>
<feature type="transmembrane region" description="Helical" evidence="1">
    <location>
        <begin position="8"/>
        <end position="28"/>
    </location>
</feature>
<feature type="transmembrane region" description="Helical" evidence="1">
    <location>
        <begin position="47"/>
        <end position="67"/>
    </location>
</feature>
<feature type="transmembrane region" description="Helical" evidence="1">
    <location>
        <begin position="82"/>
        <end position="102"/>
    </location>
</feature>
<comment type="subcellular location">
    <subcellularLocation>
        <location evidence="2">Cell membrane</location>
        <topology evidence="2">Multi-pass membrane protein</topology>
    </subcellularLocation>
</comment>
<comment type="similarity">
    <text evidence="2">To U.parvum UU007, UU008 and UU041.</text>
</comment>
<name>Y042_UREPA</name>
<sequence>MSPISIELIIQISIGLSASLILLFAFLPQTLLTIKTKNTAALTISMFIICFIARLCFSLSAILTIIVYIHNQNYGLSLYALTLPVLICHGINMLLNLIIAFIKINNVYKAKIHKMNENEYIIFAYAQKLKEKVSIKNK</sequence>
<gene>
    <name type="ordered locus">UU042</name>
</gene>
<evidence type="ECO:0000255" key="1"/>
<evidence type="ECO:0000305" key="2"/>
<accession>Q9PRA3</accession>
<proteinExistence type="predicted"/>
<organism>
    <name type="scientific">Ureaplasma parvum serovar 3 (strain ATCC 700970)</name>
    <dbReference type="NCBI Taxonomy" id="273119"/>
    <lineage>
        <taxon>Bacteria</taxon>
        <taxon>Bacillati</taxon>
        <taxon>Mycoplasmatota</taxon>
        <taxon>Mycoplasmoidales</taxon>
        <taxon>Mycoplasmoidaceae</taxon>
        <taxon>Ureaplasma</taxon>
    </lineage>
</organism>
<keyword id="KW-1003">Cell membrane</keyword>
<keyword id="KW-0472">Membrane</keyword>
<keyword id="KW-1185">Reference proteome</keyword>
<keyword id="KW-0812">Transmembrane</keyword>
<keyword id="KW-1133">Transmembrane helix</keyword>
<protein>
    <recommendedName>
        <fullName>Uncharacterized protein UU042</fullName>
    </recommendedName>
</protein>